<gene>
    <name type="primary">SPP1</name>
    <name type="ordered locus">Os02g0117400</name>
    <name type="ordered locus">LOC_Os02g02530</name>
    <name type="ORF">OJ1442_E05.26</name>
    <name type="ORF">OsJ_05128</name>
</gene>
<reference key="1">
    <citation type="journal article" date="2005" name="Nature">
        <title>The map-based sequence of the rice genome.</title>
        <authorList>
            <consortium name="International rice genome sequencing project (IRGSP)"/>
        </authorList>
    </citation>
    <scope>NUCLEOTIDE SEQUENCE [LARGE SCALE GENOMIC DNA]</scope>
    <source>
        <strain>cv. Nipponbare</strain>
    </source>
</reference>
<reference key="2">
    <citation type="journal article" date="2008" name="Nucleic Acids Res.">
        <title>The rice annotation project database (RAP-DB): 2008 update.</title>
        <authorList>
            <consortium name="The rice annotation project (RAP)"/>
        </authorList>
    </citation>
    <scope>GENOME REANNOTATION</scope>
    <source>
        <strain>cv. Nipponbare</strain>
    </source>
</reference>
<reference key="3">
    <citation type="journal article" date="2013" name="Rice">
        <title>Improvement of the Oryza sativa Nipponbare reference genome using next generation sequence and optical map data.</title>
        <authorList>
            <person name="Kawahara Y."/>
            <person name="de la Bastide M."/>
            <person name="Hamilton J.P."/>
            <person name="Kanamori H."/>
            <person name="McCombie W.R."/>
            <person name="Ouyang S."/>
            <person name="Schwartz D.C."/>
            <person name="Tanaka T."/>
            <person name="Wu J."/>
            <person name="Zhou S."/>
            <person name="Childs K.L."/>
            <person name="Davidson R.M."/>
            <person name="Lin H."/>
            <person name="Quesada-Ocampo L."/>
            <person name="Vaillancourt B."/>
            <person name="Sakai H."/>
            <person name="Lee S.S."/>
            <person name="Kim J."/>
            <person name="Numa H."/>
            <person name="Itoh T."/>
            <person name="Buell C.R."/>
            <person name="Matsumoto T."/>
        </authorList>
    </citation>
    <scope>GENOME REANNOTATION</scope>
    <source>
        <strain>cv. Nipponbare</strain>
    </source>
</reference>
<reference key="4">
    <citation type="journal article" date="2005" name="PLoS Biol.">
        <title>The genomes of Oryza sativa: a history of duplications.</title>
        <authorList>
            <person name="Yu J."/>
            <person name="Wang J."/>
            <person name="Lin W."/>
            <person name="Li S."/>
            <person name="Li H."/>
            <person name="Zhou J."/>
            <person name="Ni P."/>
            <person name="Dong W."/>
            <person name="Hu S."/>
            <person name="Zeng C."/>
            <person name="Zhang J."/>
            <person name="Zhang Y."/>
            <person name="Li R."/>
            <person name="Xu Z."/>
            <person name="Li S."/>
            <person name="Li X."/>
            <person name="Zheng H."/>
            <person name="Cong L."/>
            <person name="Lin L."/>
            <person name="Yin J."/>
            <person name="Geng J."/>
            <person name="Li G."/>
            <person name="Shi J."/>
            <person name="Liu J."/>
            <person name="Lv H."/>
            <person name="Li J."/>
            <person name="Wang J."/>
            <person name="Deng Y."/>
            <person name="Ran L."/>
            <person name="Shi X."/>
            <person name="Wang X."/>
            <person name="Wu Q."/>
            <person name="Li C."/>
            <person name="Ren X."/>
            <person name="Wang J."/>
            <person name="Wang X."/>
            <person name="Li D."/>
            <person name="Liu D."/>
            <person name="Zhang X."/>
            <person name="Ji Z."/>
            <person name="Zhao W."/>
            <person name="Sun Y."/>
            <person name="Zhang Z."/>
            <person name="Bao J."/>
            <person name="Han Y."/>
            <person name="Dong L."/>
            <person name="Ji J."/>
            <person name="Chen P."/>
            <person name="Wu S."/>
            <person name="Liu J."/>
            <person name="Xiao Y."/>
            <person name="Bu D."/>
            <person name="Tan J."/>
            <person name="Yang L."/>
            <person name="Ye C."/>
            <person name="Zhang J."/>
            <person name="Xu J."/>
            <person name="Zhou Y."/>
            <person name="Yu Y."/>
            <person name="Zhang B."/>
            <person name="Zhuang S."/>
            <person name="Wei H."/>
            <person name="Liu B."/>
            <person name="Lei M."/>
            <person name="Yu H."/>
            <person name="Li Y."/>
            <person name="Xu H."/>
            <person name="Wei S."/>
            <person name="He X."/>
            <person name="Fang L."/>
            <person name="Zhang Z."/>
            <person name="Zhang Y."/>
            <person name="Huang X."/>
            <person name="Su Z."/>
            <person name="Tong W."/>
            <person name="Li J."/>
            <person name="Tong Z."/>
            <person name="Li S."/>
            <person name="Ye J."/>
            <person name="Wang L."/>
            <person name="Fang L."/>
            <person name="Lei T."/>
            <person name="Chen C.-S."/>
            <person name="Chen H.-C."/>
            <person name="Xu Z."/>
            <person name="Li H."/>
            <person name="Huang H."/>
            <person name="Zhang F."/>
            <person name="Xu H."/>
            <person name="Li N."/>
            <person name="Zhao C."/>
            <person name="Li S."/>
            <person name="Dong L."/>
            <person name="Huang Y."/>
            <person name="Li L."/>
            <person name="Xi Y."/>
            <person name="Qi Q."/>
            <person name="Li W."/>
            <person name="Zhang B."/>
            <person name="Hu W."/>
            <person name="Zhang Y."/>
            <person name="Tian X."/>
            <person name="Jiao Y."/>
            <person name="Liang X."/>
            <person name="Jin J."/>
            <person name="Gao L."/>
            <person name="Zheng W."/>
            <person name="Hao B."/>
            <person name="Liu S.-M."/>
            <person name="Wang W."/>
            <person name="Yuan L."/>
            <person name="Cao M."/>
            <person name="McDermott J."/>
            <person name="Samudrala R."/>
            <person name="Wang J."/>
            <person name="Wong G.K.-S."/>
            <person name="Yang H."/>
        </authorList>
    </citation>
    <scope>NUCLEOTIDE SEQUENCE [LARGE SCALE GENOMIC DNA]</scope>
    <source>
        <strain>cv. Nipponbare</strain>
    </source>
</reference>
<reference key="5">
    <citation type="journal article" date="2003" name="Science">
        <title>Collection, mapping, and annotation of over 28,000 cDNA clones from japonica rice.</title>
        <authorList>
            <consortium name="The rice full-length cDNA consortium"/>
        </authorList>
    </citation>
    <scope>NUCLEOTIDE SEQUENCE [LARGE SCALE MRNA]</scope>
    <source>
        <strain>cv. Nipponbare</strain>
    </source>
</reference>
<reference key="6">
    <citation type="journal article" date="2009" name="Plant Cell Rep.">
        <title>Signal peptide peptidases are expressed in the shoot apex of rice, localized to the endoplasmic reticulum.</title>
        <authorList>
            <person name="Tamura T."/>
            <person name="Kuroda M."/>
            <person name="Oikawa T."/>
            <person name="Kyozuka J."/>
            <person name="Terauchi K."/>
            <person name="Ishimaru Y."/>
            <person name="Abe K."/>
            <person name="Asakura T."/>
        </authorList>
    </citation>
    <scope>GENE FAMILY</scope>
    <scope>NOMENCLATURE</scope>
    <scope>SUBCELLULAR LOCATION</scope>
    <scope>TISSUE SPECIFICITY</scope>
    <scope>DEVELOPMENTAL STAGE</scope>
</reference>
<evidence type="ECO:0000250" key="1"/>
<evidence type="ECO:0000255" key="2"/>
<evidence type="ECO:0000256" key="3">
    <source>
        <dbReference type="SAM" id="MobiDB-lite"/>
    </source>
</evidence>
<evidence type="ECO:0000269" key="4">
    <source>
    </source>
</evidence>
<evidence type="ECO:0000305" key="5"/>
<proteinExistence type="evidence at transcript level"/>
<sequence>MKTHERAANLALAGLSLAPLVVKVEPNVNVILTACLAVYVGCYRSVKPTPPSETMSKEHAMRFPLVGSAMLLSLFLLFKFLSKDLVNAVLTAYFFILGIAALCATLLPSIKRFLPKEWNDNAIVWCAPFFHSLSVEFTKSQVVASIPGFFFCIWYAAKKHWLANNVLGISFCIQGIEMLSLGSFKTGAILLAGLFFYDIFWVFFTPVMVSVAKSFDAPIKLLFPTGDAARPFSMLGLGDIVIPGIFVALALRFDVSRGIKNRYFNSAFLGYTVGLTVTIIVMNWFQAAQPALLYIVPGVIGFVAVHCLWNGEVKPLLEYNESKAEEEDAVEEDTDSKQNKKEE</sequence>
<dbReference type="EC" id="3.4.23.-"/>
<dbReference type="EMBL" id="AP004121">
    <property type="protein sequence ID" value="BAD07725.1"/>
    <property type="molecule type" value="Genomic_DNA"/>
</dbReference>
<dbReference type="EMBL" id="AP008208">
    <property type="protein sequence ID" value="BAF07600.1"/>
    <property type="molecule type" value="Genomic_DNA"/>
</dbReference>
<dbReference type="EMBL" id="AP014958">
    <property type="protein sequence ID" value="BAS76666.1"/>
    <property type="molecule type" value="Genomic_DNA"/>
</dbReference>
<dbReference type="EMBL" id="CM000139">
    <property type="protein sequence ID" value="EEE56177.1"/>
    <property type="molecule type" value="Genomic_DNA"/>
</dbReference>
<dbReference type="EMBL" id="AK061815">
    <property type="protein sequence ID" value="BAG88125.1"/>
    <property type="molecule type" value="mRNA"/>
</dbReference>
<dbReference type="EMBL" id="AK102022">
    <property type="protein sequence ID" value="BAG95345.1"/>
    <property type="molecule type" value="mRNA"/>
</dbReference>
<dbReference type="RefSeq" id="XP_015627635.1">
    <property type="nucleotide sequence ID" value="XM_015772149.1"/>
</dbReference>
<dbReference type="FunCoup" id="Q6ZGL9">
    <property type="interactions" value="2729"/>
</dbReference>
<dbReference type="STRING" id="39947.Q6ZGL9"/>
<dbReference type="MEROPS" id="A22.A15"/>
<dbReference type="PaxDb" id="39947-Q6ZGL9"/>
<dbReference type="EnsemblPlants" id="Os02t0117400-01">
    <property type="protein sequence ID" value="Os02t0117400-01"/>
    <property type="gene ID" value="Os02g0117400"/>
</dbReference>
<dbReference type="Gramene" id="Os02t0117400-01">
    <property type="protein sequence ID" value="Os02t0117400-01"/>
    <property type="gene ID" value="Os02g0117400"/>
</dbReference>
<dbReference type="KEGG" id="dosa:Os02g0117400"/>
<dbReference type="eggNOG" id="KOG2443">
    <property type="taxonomic scope" value="Eukaryota"/>
</dbReference>
<dbReference type="HOGENOM" id="CLU_023799_0_1_1"/>
<dbReference type="InParanoid" id="Q6ZGL9"/>
<dbReference type="OMA" id="EFKIMIK"/>
<dbReference type="OrthoDB" id="29661at2759"/>
<dbReference type="Proteomes" id="UP000000763">
    <property type="component" value="Chromosome 2"/>
</dbReference>
<dbReference type="Proteomes" id="UP000007752">
    <property type="component" value="Chromosome 2"/>
</dbReference>
<dbReference type="Proteomes" id="UP000059680">
    <property type="component" value="Chromosome 2"/>
</dbReference>
<dbReference type="GO" id="GO:0098554">
    <property type="term" value="C:cytoplasmic side of endoplasmic reticulum membrane"/>
    <property type="evidence" value="ECO:0000318"/>
    <property type="project" value="GO_Central"/>
</dbReference>
<dbReference type="GO" id="GO:0005783">
    <property type="term" value="C:endoplasmic reticulum"/>
    <property type="evidence" value="ECO:0000314"/>
    <property type="project" value="UniProtKB"/>
</dbReference>
<dbReference type="GO" id="GO:0098553">
    <property type="term" value="C:lumenal side of endoplasmic reticulum membrane"/>
    <property type="evidence" value="ECO:0000318"/>
    <property type="project" value="GO_Central"/>
</dbReference>
<dbReference type="GO" id="GO:0042500">
    <property type="term" value="F:aspartic endopeptidase activity, intramembrane cleaving"/>
    <property type="evidence" value="ECO:0000318"/>
    <property type="project" value="GO_Central"/>
</dbReference>
<dbReference type="GO" id="GO:0033619">
    <property type="term" value="P:membrane protein proteolysis"/>
    <property type="evidence" value="ECO:0000318"/>
    <property type="project" value="GO_Central"/>
</dbReference>
<dbReference type="GO" id="GO:0006465">
    <property type="term" value="P:signal peptide processing"/>
    <property type="evidence" value="ECO:0000318"/>
    <property type="project" value="GO_Central"/>
</dbReference>
<dbReference type="InterPro" id="IPR007369">
    <property type="entry name" value="Peptidase_A22B_SPP"/>
</dbReference>
<dbReference type="InterPro" id="IPR006639">
    <property type="entry name" value="Preselin/SPP"/>
</dbReference>
<dbReference type="PANTHER" id="PTHR12174:SF23">
    <property type="entry name" value="MINOR HISTOCOMPATIBILITY ANTIGEN H13"/>
    <property type="match status" value="1"/>
</dbReference>
<dbReference type="PANTHER" id="PTHR12174">
    <property type="entry name" value="SIGNAL PEPTIDE PEPTIDASE"/>
    <property type="match status" value="1"/>
</dbReference>
<dbReference type="Pfam" id="PF04258">
    <property type="entry name" value="Peptidase_A22B"/>
    <property type="match status" value="1"/>
</dbReference>
<dbReference type="SMART" id="SM00730">
    <property type="entry name" value="PSN"/>
    <property type="match status" value="1"/>
</dbReference>
<protein>
    <recommendedName>
        <fullName>Signal peptide peptidase 1</fullName>
        <shortName>OsSPP1</shortName>
        <ecNumber>3.4.23.-</ecNumber>
    </recommendedName>
    <alternativeName>
        <fullName>Intramembrane protease 1</fullName>
        <shortName>IMP</shortName>
        <shortName>IMPAS</shortName>
    </alternativeName>
</protein>
<organism>
    <name type="scientific">Oryza sativa subsp. japonica</name>
    <name type="common">Rice</name>
    <dbReference type="NCBI Taxonomy" id="39947"/>
    <lineage>
        <taxon>Eukaryota</taxon>
        <taxon>Viridiplantae</taxon>
        <taxon>Streptophyta</taxon>
        <taxon>Embryophyta</taxon>
        <taxon>Tracheophyta</taxon>
        <taxon>Spermatophyta</taxon>
        <taxon>Magnoliopsida</taxon>
        <taxon>Liliopsida</taxon>
        <taxon>Poales</taxon>
        <taxon>Poaceae</taxon>
        <taxon>BOP clade</taxon>
        <taxon>Oryzoideae</taxon>
        <taxon>Oryzeae</taxon>
        <taxon>Oryzinae</taxon>
        <taxon>Oryza</taxon>
        <taxon>Oryza sativa</taxon>
    </lineage>
</organism>
<name>SIP1_ORYSJ</name>
<feature type="chain" id="PRO_0000419098" description="Signal peptide peptidase 1">
    <location>
        <begin position="1"/>
        <end position="343"/>
    </location>
</feature>
<feature type="topological domain" description="Lumenal" evidence="2">
    <location>
        <begin position="1"/>
        <end position="19"/>
    </location>
</feature>
<feature type="transmembrane region" description="Helical" evidence="2">
    <location>
        <begin position="20"/>
        <end position="40"/>
    </location>
</feature>
<feature type="topological domain" description="Cytoplasmic" evidence="2">
    <location>
        <begin position="41"/>
        <end position="62"/>
    </location>
</feature>
<feature type="transmembrane region" description="Helical" evidence="2">
    <location>
        <begin position="63"/>
        <end position="83"/>
    </location>
</feature>
<feature type="topological domain" description="Lumenal" evidence="2">
    <location>
        <begin position="84"/>
        <end position="87"/>
    </location>
</feature>
<feature type="transmembrane region" description="Helical" evidence="2">
    <location>
        <begin position="88"/>
        <end position="108"/>
    </location>
</feature>
<feature type="topological domain" description="Cytoplasmic" evidence="2">
    <location>
        <begin position="109"/>
        <end position="136"/>
    </location>
</feature>
<feature type="transmembrane region" description="Helical" evidence="2">
    <location>
        <begin position="137"/>
        <end position="157"/>
    </location>
</feature>
<feature type="topological domain" description="Lumenal" evidence="2">
    <location>
        <begin position="158"/>
        <end position="160"/>
    </location>
</feature>
<feature type="transmembrane region" description="Helical" evidence="2">
    <location>
        <begin position="161"/>
        <end position="181"/>
    </location>
</feature>
<feature type="topological domain" description="Cytoplasmic" evidence="2">
    <location>
        <begin position="182"/>
        <end position="188"/>
    </location>
</feature>
<feature type="transmembrane region" description="Helical" evidence="2">
    <location>
        <begin position="189"/>
        <end position="209"/>
    </location>
</feature>
<feature type="topological domain" description="Lumenal" evidence="2">
    <location>
        <begin position="210"/>
        <end position="230"/>
    </location>
</feature>
<feature type="transmembrane region" description="Helical" evidence="2">
    <location>
        <begin position="231"/>
        <end position="251"/>
    </location>
</feature>
<feature type="topological domain" description="Cytoplasmic" evidence="2">
    <location>
        <begin position="252"/>
        <end position="266"/>
    </location>
</feature>
<feature type="transmembrane region" description="Helical" evidence="2">
    <location>
        <begin position="267"/>
        <end position="287"/>
    </location>
</feature>
<feature type="topological domain" description="Lumenal" evidence="2">
    <location>
        <begin position="288"/>
        <end position="290"/>
    </location>
</feature>
<feature type="transmembrane region" description="Helical" evidence="2">
    <location>
        <begin position="291"/>
        <end position="311"/>
    </location>
</feature>
<feature type="topological domain" description="Cytoplasmic" evidence="2">
    <location>
        <begin position="312"/>
        <end position="343"/>
    </location>
</feature>
<feature type="region of interest" description="Disordered" evidence="3">
    <location>
        <begin position="322"/>
        <end position="343"/>
    </location>
</feature>
<feature type="short sequence motif" description="PAL">
    <location>
        <begin position="290"/>
        <end position="292"/>
    </location>
</feature>
<feature type="short sequence motif" description="Endoplasmic reticulum targeting signal" evidence="2">
    <location>
        <begin position="340"/>
        <end position="343"/>
    </location>
</feature>
<feature type="compositionally biased region" description="Acidic residues" evidence="3">
    <location>
        <begin position="324"/>
        <end position="334"/>
    </location>
</feature>
<feature type="active site" evidence="1">
    <location>
        <position position="198"/>
    </location>
</feature>
<feature type="active site" evidence="1">
    <location>
        <position position="239"/>
    </location>
</feature>
<keyword id="KW-0256">Endoplasmic reticulum</keyword>
<keyword id="KW-0378">Hydrolase</keyword>
<keyword id="KW-0472">Membrane</keyword>
<keyword id="KW-0645">Protease</keyword>
<keyword id="KW-1185">Reference proteome</keyword>
<keyword id="KW-0812">Transmembrane</keyword>
<keyword id="KW-1133">Transmembrane helix</keyword>
<comment type="function">
    <text evidence="1">Intramembrane-cleaving aspartic protease (I-CLiP) that cleaves type II membrane signal peptides in the hydrophobic plane of the membrane. Catalyzes intramembrane proteolysis of some signal peptides after they have been cleaved from a preprotein, resulting in the release of the fragment from the ER membrane into the cytoplasm.</text>
</comment>
<comment type="subcellular location">
    <subcellularLocation>
        <location evidence="4">Endoplasmic reticulum membrane</location>
        <topology evidence="4">Multi-pass membrane protein</topology>
    </subcellularLocation>
</comment>
<comment type="tissue specificity">
    <text evidence="4">Ubiquitous.</text>
</comment>
<comment type="developmental stage">
    <text evidence="4">Strongly expressed in vegetative shoot apex, young panicle, developing panicle, and the early developing florets.</text>
</comment>
<comment type="domain">
    <text evidence="1">The first transmembrane domain may act as a type I signal anchor. The PAL motif is required for normal active site conformation.</text>
</comment>
<comment type="similarity">
    <text evidence="5">Belongs to the peptidase A22B family.</text>
</comment>
<accession>Q6ZGL9</accession>
<accession>A0A0P0VDZ2</accession>